<evidence type="ECO:0000250" key="1">
    <source>
        <dbReference type="UniProtKB" id="P21742"/>
    </source>
</evidence>
<evidence type="ECO:0000269" key="2">
    <source>
    </source>
</evidence>
<evidence type="ECO:0000269" key="3">
    <source>
    </source>
</evidence>
<evidence type="ECO:0000303" key="4">
    <source>
    </source>
</evidence>
<evidence type="ECO:0000303" key="5">
    <source>
    </source>
</evidence>
<evidence type="ECO:0000305" key="6"/>
<accession>P01545</accession>
<sequence length="127" mass="13597">MVCLLILGLVLEQVQVEGKSCCRSTLGRNCYNLCRVRGAQKLCAGVCRCKLTSSGKCPTGFPKLALVSNSDEPDTVKYCNLGCRASMCDYMVNAAADDEEMKLYLENCGDACVNFCNGDAGLTSLTA</sequence>
<dbReference type="EMBL" id="X05901">
    <property type="protein sequence ID" value="CAA29330.1"/>
    <property type="molecule type" value="mRNA"/>
</dbReference>
<dbReference type="EMBL" id="M23080">
    <property type="protein sequence ID" value="AAA32966.1"/>
    <property type="status" value="ALT_INIT"/>
    <property type="molecule type" value="Genomic_DNA"/>
</dbReference>
<dbReference type="PIR" id="JA0087">
    <property type="entry name" value="VSBH2"/>
</dbReference>
<dbReference type="SMR" id="P01545"/>
<dbReference type="ExpressionAtlas" id="P01545">
    <property type="expression patterns" value="baseline"/>
</dbReference>
<dbReference type="GO" id="GO:0005576">
    <property type="term" value="C:extracellular region"/>
    <property type="evidence" value="ECO:0007669"/>
    <property type="project" value="UniProtKB-SubCell"/>
</dbReference>
<dbReference type="GO" id="GO:0090729">
    <property type="term" value="F:toxin activity"/>
    <property type="evidence" value="ECO:0007669"/>
    <property type="project" value="UniProtKB-KW"/>
</dbReference>
<dbReference type="GO" id="GO:0006952">
    <property type="term" value="P:defense response"/>
    <property type="evidence" value="ECO:0007669"/>
    <property type="project" value="UniProtKB-KW"/>
</dbReference>
<dbReference type="FunFam" id="3.30.1350.10:FF:000001">
    <property type="entry name" value="Hellethionin-D"/>
    <property type="match status" value="1"/>
</dbReference>
<dbReference type="Gene3D" id="3.30.1350.10">
    <property type="entry name" value="Thionin-like"/>
    <property type="match status" value="1"/>
</dbReference>
<dbReference type="InterPro" id="IPR001010">
    <property type="entry name" value="Thionin"/>
</dbReference>
<dbReference type="InterPro" id="IPR036391">
    <property type="entry name" value="Thionin-like_sf"/>
</dbReference>
<dbReference type="PANTHER" id="PTHR33920:SF9">
    <property type="entry name" value="ALPHA-2-PUROTHIONIN"/>
    <property type="match status" value="1"/>
</dbReference>
<dbReference type="PANTHER" id="PTHR33920">
    <property type="entry name" value="THIONIN-2.1-RELATED"/>
    <property type="match status" value="1"/>
</dbReference>
<dbReference type="Pfam" id="PF00321">
    <property type="entry name" value="Thionin"/>
    <property type="match status" value="1"/>
</dbReference>
<dbReference type="PRINTS" id="PR00287">
    <property type="entry name" value="THIONIN"/>
</dbReference>
<dbReference type="SUPFAM" id="SSF57429">
    <property type="entry name" value="Crambin-like"/>
    <property type="match status" value="1"/>
</dbReference>
<dbReference type="PROSITE" id="PS00271">
    <property type="entry name" value="THIONIN"/>
    <property type="match status" value="1"/>
</dbReference>
<name>THNA_HORVU</name>
<organism>
    <name type="scientific">Hordeum vulgare</name>
    <name type="common">Barley</name>
    <dbReference type="NCBI Taxonomy" id="4513"/>
    <lineage>
        <taxon>Eukaryota</taxon>
        <taxon>Viridiplantae</taxon>
        <taxon>Streptophyta</taxon>
        <taxon>Embryophyta</taxon>
        <taxon>Tracheophyta</taxon>
        <taxon>Spermatophyta</taxon>
        <taxon>Magnoliopsida</taxon>
        <taxon>Liliopsida</taxon>
        <taxon>Poales</taxon>
        <taxon>Poaceae</taxon>
        <taxon>BOP clade</taxon>
        <taxon>Pooideae</taxon>
        <taxon>Triticodae</taxon>
        <taxon>Triticeae</taxon>
        <taxon>Hordeinae</taxon>
        <taxon>Hordeum</taxon>
    </lineage>
</organism>
<keyword id="KW-0903">Direct protein sequencing</keyword>
<keyword id="KW-1015">Disulfide bond</keyword>
<keyword id="KW-0611">Plant defense</keyword>
<keyword id="KW-0964">Secreted</keyword>
<keyword id="KW-0732">Signal</keyword>
<keyword id="KW-0800">Toxin</keyword>
<protein>
    <recommendedName>
        <fullName evidence="4 5">Alpha-hordothionin</fullName>
    </recommendedName>
    <alternativeName>
        <fullName>Purothionin II</fullName>
    </alternativeName>
</protein>
<comment type="function">
    <text>Thionins are small plant proteins which are toxic to animal cells. They seem to exert their toxic effect at the level of the cell membrane. Their precise function is not known.</text>
</comment>
<comment type="subcellular location">
    <subcellularLocation>
        <location evidence="2 3">Secreted</location>
    </subcellularLocation>
</comment>
<comment type="similarity">
    <text evidence="6">Belongs to the plant thionin (TC 1.C.44) family. 4 C-C subfamily.</text>
</comment>
<comment type="sequence caution" evidence="6">
    <conflict type="erroneous initiation">
        <sequence resource="EMBL-CDS" id="AAA32966"/>
    </conflict>
</comment>
<proteinExistence type="evidence at protein level"/>
<gene>
    <name type="primary">THI1.1</name>
</gene>
<feature type="signal peptide" evidence="2 3">
    <location>
        <begin position="1"/>
        <end position="18"/>
    </location>
</feature>
<feature type="chain" id="PRO_0000034112" description="Alpha-hordothionin" evidence="3">
    <location>
        <begin position="19"/>
        <end position="63"/>
    </location>
</feature>
<feature type="propeptide" id="PRO_0000459409" description="Acidic domain" evidence="6">
    <location>
        <begin position="64"/>
        <end position="127"/>
    </location>
</feature>
<feature type="disulfide bond" evidence="1">
    <location>
        <begin position="21"/>
        <end position="57"/>
    </location>
</feature>
<feature type="disulfide bond" evidence="1">
    <location>
        <begin position="22"/>
        <end position="49"/>
    </location>
</feature>
<feature type="disulfide bond" evidence="1">
    <location>
        <begin position="30"/>
        <end position="47"/>
    </location>
</feature>
<feature type="disulfide bond" evidence="1">
    <location>
        <begin position="34"/>
        <end position="43"/>
    </location>
</feature>
<reference key="1">
    <citation type="journal article" date="1986" name="Eur. J. Biochem.">
        <title>Cloning and nucleotide sequence of a cDNA encoding the precursor of the barley toxin alpha-hordothionin.</title>
        <authorList>
            <person name="Ponz F."/>
            <person name="Paz-Ares J."/>
            <person name="Hernandez-Lucas C."/>
            <person name="Garcia-Olmedo F."/>
            <person name="Carbonero P."/>
        </authorList>
    </citation>
    <scope>NUCLEOTIDE SEQUENCE [MRNA]</scope>
</reference>
<reference key="2">
    <citation type="journal article" date="1988" name="Gene">
        <title>Nucleotide sequence and endosperm-specific expression of the structural gene for the toxin alpha-hordothionin in barley (Hordeum vulgare L.).</title>
        <authorList>
            <person name="Rodriguez-Palenzuela P."/>
            <person name="Pintor-Toro J.A."/>
            <person name="Carbonero P."/>
            <person name="Garcia-Olmedo F."/>
        </authorList>
    </citation>
    <scope>NUCLEOTIDE SEQUENCE [GENOMIC DNA]</scope>
</reference>
<reference key="3">
    <citation type="journal article" date="1980" name="J. Biochem.">
        <title>Amino acid sequence of a purothionin homolog from barley flour.</title>
        <authorList>
            <person name="Ozaki Y."/>
            <person name="Wada K."/>
            <person name="Hase T."/>
            <person name="Matsubara H."/>
            <person name="Nakanishi T."/>
            <person name="Yoshizumi H."/>
        </authorList>
    </citation>
    <scope>PROTEIN SEQUENCE OF 19-63</scope>
    <scope>SUBCELLULAR LOCATION</scope>
</reference>
<reference key="4">
    <citation type="journal article" date="2000" name="Electrophoresis">
        <title>Separation and characterization of basic barley seed proteins.</title>
        <authorList>
            <person name="Kristoffersen H.E."/>
            <person name="Flengsrud R."/>
        </authorList>
    </citation>
    <scope>PROTEIN SEQUENCE OF 19-27</scope>
    <scope>SUBCELLULAR LOCATION</scope>
    <source>
        <strain>cv. Bomi</strain>
        <tissue>Starchy endosperm</tissue>
    </source>
</reference>